<comment type="function">
    <text evidence="1">Virion protein with no enzymatic activity.</text>
</comment>
<comment type="subcellular location">
    <subcellularLocation>
        <location evidence="1">Host cytoplasm</location>
    </subcellularLocation>
</comment>
<comment type="similarity">
    <text evidence="2">Belongs to the Cu-Zn superoxide dismutase family.</text>
</comment>
<sequence length="125" mass="13691">MAVCIIDHDNIRGVIYFEPVHGKDKVLGSVIGLKSGTYSLIIHRYGDISRGCDSIGSPEIFIGNIFVNRYGVAYVYLDTDVNISTIIGKALSISKNDQRLACGVIGISYINEKIIHFLTINENGV</sequence>
<evidence type="ECO:0000250" key="1"/>
<evidence type="ECO:0000305" key="2"/>
<proteinExistence type="inferred from homology"/>
<protein>
    <recommendedName>
        <fullName>Cu-Zn superoxide dismutase-like protein</fullName>
    </recommendedName>
</protein>
<feature type="chain" id="PRO_0000164174" description="Cu-Zn superoxide dismutase-like protein">
    <location>
        <begin position="1"/>
        <end position="125"/>
    </location>
</feature>
<feature type="disulfide bond" evidence="1">
    <location>
        <begin position="52"/>
        <end position="102"/>
    </location>
</feature>
<name>SODL_CWPXG</name>
<keyword id="KW-1015">Disulfide bond</keyword>
<keyword id="KW-1035">Host cytoplasm</keyword>
<gene>
    <name type="ORF">A48R</name>
</gene>
<organismHost>
    <name type="scientific">Bos taurus</name>
    <name type="common">Bovine</name>
    <dbReference type="NCBI Taxonomy" id="9913"/>
</organismHost>
<organismHost>
    <name type="scientific">Felis catus</name>
    <name type="common">Cat</name>
    <name type="synonym">Felis silvestris catus</name>
    <dbReference type="NCBI Taxonomy" id="9685"/>
</organismHost>
<organismHost>
    <name type="scientific">Homo sapiens</name>
    <name type="common">Human</name>
    <dbReference type="NCBI Taxonomy" id="9606"/>
</organismHost>
<organismHost>
    <name type="scientific">Loxodonta africana</name>
    <name type="common">African elephant</name>
    <dbReference type="NCBI Taxonomy" id="9785"/>
</organismHost>
<organismHost>
    <name type="scientific">Microtus agrestis</name>
    <name type="common">Short-tailed field vole</name>
    <dbReference type="NCBI Taxonomy" id="29092"/>
</organismHost>
<organismHost>
    <name type="scientific">Mus musculus</name>
    <name type="common">Mouse</name>
    <dbReference type="NCBI Taxonomy" id="10090"/>
</organismHost>
<organismHost>
    <name type="scientific">Myodes glareolus</name>
    <name type="common">Bank vole</name>
    <name type="synonym">Clethrionomys glareolus</name>
    <dbReference type="NCBI Taxonomy" id="447135"/>
</organismHost>
<organism>
    <name type="scientific">Cowpox virus (strain GRI-90 / Grishak)</name>
    <name type="common">CPV</name>
    <dbReference type="NCBI Taxonomy" id="265871"/>
    <lineage>
        <taxon>Viruses</taxon>
        <taxon>Varidnaviria</taxon>
        <taxon>Bamfordvirae</taxon>
        <taxon>Nucleocytoviricota</taxon>
        <taxon>Pokkesviricetes</taxon>
        <taxon>Chitovirales</taxon>
        <taxon>Poxviridae</taxon>
        <taxon>Chordopoxvirinae</taxon>
        <taxon>Orthopoxvirus</taxon>
        <taxon>Cowpox virus</taxon>
    </lineage>
</organism>
<dbReference type="EMBL" id="X94355">
    <property type="protein sequence ID" value="CAD90715.1"/>
    <property type="molecule type" value="Genomic_DNA"/>
</dbReference>
<dbReference type="SMR" id="Q80DT0"/>
<dbReference type="Proteomes" id="UP000137384">
    <property type="component" value="Segment"/>
</dbReference>
<dbReference type="GO" id="GO:0030430">
    <property type="term" value="C:host cell cytoplasm"/>
    <property type="evidence" value="ECO:0007669"/>
    <property type="project" value="UniProtKB-SubCell"/>
</dbReference>
<dbReference type="GO" id="GO:0046872">
    <property type="term" value="F:metal ion binding"/>
    <property type="evidence" value="ECO:0007669"/>
    <property type="project" value="InterPro"/>
</dbReference>
<dbReference type="GO" id="GO:0006801">
    <property type="term" value="P:superoxide metabolic process"/>
    <property type="evidence" value="ECO:0007669"/>
    <property type="project" value="InterPro"/>
</dbReference>
<dbReference type="Gene3D" id="2.60.40.200">
    <property type="entry name" value="Superoxide dismutase, copper/zinc binding domain"/>
    <property type="match status" value="1"/>
</dbReference>
<dbReference type="InterPro" id="IPR036423">
    <property type="entry name" value="SOD-like_Cu/Zn_dom_sf"/>
</dbReference>
<dbReference type="SUPFAM" id="SSF49329">
    <property type="entry name" value="Cu,Zn superoxide dismutase-like"/>
    <property type="match status" value="1"/>
</dbReference>
<accession>Q80DT0</accession>
<reference key="1">
    <citation type="submission" date="2003-03" db="EMBL/GenBank/DDBJ databases">
        <title>Structure-function and organization of cowpox virus strain GRI-90 complete genome.</title>
        <authorList>
            <person name="Shchelkunov S.N."/>
            <person name="Safronov P.F."/>
            <person name="Totmenin A.V."/>
            <person name="Miheev M.V."/>
            <person name="Ryazankina O.I."/>
            <person name="Petrov N.A."/>
            <person name="Gutorov V.V."/>
            <person name="Kotwal G.J."/>
            <person name="Sandakhchiev L.S."/>
        </authorList>
    </citation>
    <scope>NUCLEOTIDE SEQUENCE [LARGE SCALE GENOMIC DNA]</scope>
</reference>